<dbReference type="EMBL" id="AE008384">
    <property type="protein sequence ID" value="AAM32986.1"/>
    <property type="molecule type" value="Genomic_DNA"/>
</dbReference>
<dbReference type="SMR" id="Q8PRZ8"/>
<dbReference type="KEGG" id="mma:MM_3290"/>
<dbReference type="PATRIC" id="fig|192952.21.peg.3822"/>
<dbReference type="eggNOG" id="arCOG04753">
    <property type="taxonomic scope" value="Archaea"/>
</dbReference>
<dbReference type="HOGENOM" id="CLU_014841_3_2_2"/>
<dbReference type="Proteomes" id="UP000000595">
    <property type="component" value="Chromosome"/>
</dbReference>
<dbReference type="GO" id="GO:0005737">
    <property type="term" value="C:cytoplasm"/>
    <property type="evidence" value="ECO:0007669"/>
    <property type="project" value="UniProtKB-SubCell"/>
</dbReference>
<dbReference type="GO" id="GO:0009380">
    <property type="term" value="C:excinuclease repair complex"/>
    <property type="evidence" value="ECO:0007669"/>
    <property type="project" value="InterPro"/>
</dbReference>
<dbReference type="GO" id="GO:0003677">
    <property type="term" value="F:DNA binding"/>
    <property type="evidence" value="ECO:0007669"/>
    <property type="project" value="UniProtKB-UniRule"/>
</dbReference>
<dbReference type="GO" id="GO:0009381">
    <property type="term" value="F:excinuclease ABC activity"/>
    <property type="evidence" value="ECO:0007669"/>
    <property type="project" value="UniProtKB-UniRule"/>
</dbReference>
<dbReference type="GO" id="GO:0006289">
    <property type="term" value="P:nucleotide-excision repair"/>
    <property type="evidence" value="ECO:0007669"/>
    <property type="project" value="UniProtKB-UniRule"/>
</dbReference>
<dbReference type="GO" id="GO:0009432">
    <property type="term" value="P:SOS response"/>
    <property type="evidence" value="ECO:0007669"/>
    <property type="project" value="UniProtKB-UniRule"/>
</dbReference>
<dbReference type="CDD" id="cd10434">
    <property type="entry name" value="GIY-YIG_UvrC_Cho"/>
    <property type="match status" value="1"/>
</dbReference>
<dbReference type="FunFam" id="4.10.860.10:FF:000022">
    <property type="match status" value="1"/>
</dbReference>
<dbReference type="FunFam" id="3.30.420.340:FF:000001">
    <property type="entry name" value="UvrABC system protein C"/>
    <property type="match status" value="1"/>
</dbReference>
<dbReference type="FunFam" id="3.40.1440.10:FF:000001">
    <property type="entry name" value="UvrABC system protein C"/>
    <property type="match status" value="1"/>
</dbReference>
<dbReference type="Gene3D" id="3.40.1440.10">
    <property type="entry name" value="GIY-YIG endonuclease"/>
    <property type="match status" value="1"/>
</dbReference>
<dbReference type="Gene3D" id="4.10.860.10">
    <property type="entry name" value="UVR domain"/>
    <property type="match status" value="1"/>
</dbReference>
<dbReference type="Gene3D" id="3.30.420.340">
    <property type="entry name" value="UvrC, RNAse H endonuclease domain"/>
    <property type="match status" value="1"/>
</dbReference>
<dbReference type="HAMAP" id="MF_00203">
    <property type="entry name" value="UvrC"/>
    <property type="match status" value="1"/>
</dbReference>
<dbReference type="InterPro" id="IPR000305">
    <property type="entry name" value="GIY-YIG_endonuc"/>
</dbReference>
<dbReference type="InterPro" id="IPR035901">
    <property type="entry name" value="GIY-YIG_endonuc_sf"/>
</dbReference>
<dbReference type="InterPro" id="IPR047296">
    <property type="entry name" value="GIY-YIG_UvrC_Cho"/>
</dbReference>
<dbReference type="InterPro" id="IPR001943">
    <property type="entry name" value="UVR_dom"/>
</dbReference>
<dbReference type="InterPro" id="IPR036876">
    <property type="entry name" value="UVR_dom_sf"/>
</dbReference>
<dbReference type="InterPro" id="IPR050066">
    <property type="entry name" value="UvrABC_protein_C"/>
</dbReference>
<dbReference type="InterPro" id="IPR004791">
    <property type="entry name" value="UvrC"/>
</dbReference>
<dbReference type="InterPro" id="IPR001162">
    <property type="entry name" value="UvrC_RNase_H_dom"/>
</dbReference>
<dbReference type="InterPro" id="IPR038476">
    <property type="entry name" value="UvrC_RNase_H_dom_sf"/>
</dbReference>
<dbReference type="NCBIfam" id="TIGR00194">
    <property type="entry name" value="uvrC"/>
    <property type="match status" value="1"/>
</dbReference>
<dbReference type="PANTHER" id="PTHR30562:SF1">
    <property type="entry name" value="UVRABC SYSTEM PROTEIN C"/>
    <property type="match status" value="1"/>
</dbReference>
<dbReference type="PANTHER" id="PTHR30562">
    <property type="entry name" value="UVRC/OXIDOREDUCTASE"/>
    <property type="match status" value="1"/>
</dbReference>
<dbReference type="Pfam" id="PF01541">
    <property type="entry name" value="GIY-YIG"/>
    <property type="match status" value="1"/>
</dbReference>
<dbReference type="Pfam" id="PF02151">
    <property type="entry name" value="UVR"/>
    <property type="match status" value="1"/>
</dbReference>
<dbReference type="Pfam" id="PF22920">
    <property type="entry name" value="UvrC_RNaseH"/>
    <property type="match status" value="1"/>
</dbReference>
<dbReference type="Pfam" id="PF08459">
    <property type="entry name" value="UvrC_RNaseH_dom"/>
    <property type="match status" value="1"/>
</dbReference>
<dbReference type="SMART" id="SM00465">
    <property type="entry name" value="GIYc"/>
    <property type="match status" value="1"/>
</dbReference>
<dbReference type="SUPFAM" id="SSF46600">
    <property type="entry name" value="C-terminal UvrC-binding domain of UvrB"/>
    <property type="match status" value="1"/>
</dbReference>
<dbReference type="SUPFAM" id="SSF82771">
    <property type="entry name" value="GIY-YIG endonuclease"/>
    <property type="match status" value="1"/>
</dbReference>
<dbReference type="PROSITE" id="PS50164">
    <property type="entry name" value="GIY_YIG"/>
    <property type="match status" value="1"/>
</dbReference>
<dbReference type="PROSITE" id="PS50151">
    <property type="entry name" value="UVR"/>
    <property type="match status" value="1"/>
</dbReference>
<dbReference type="PROSITE" id="PS50165">
    <property type="entry name" value="UVRC"/>
    <property type="match status" value="1"/>
</dbReference>
<name>UVRC_METMA</name>
<keyword id="KW-0963">Cytoplasm</keyword>
<keyword id="KW-0227">DNA damage</keyword>
<keyword id="KW-0228">DNA excision</keyword>
<keyword id="KW-0234">DNA repair</keyword>
<keyword id="KW-0267">Excision nuclease</keyword>
<keyword id="KW-0742">SOS response</keyword>
<comment type="function">
    <text evidence="1">The UvrABC repair system catalyzes the recognition and processing of DNA lesions. UvrC both incises the 5' and 3' sides of the lesion. The N-terminal half is responsible for the 3' incision and the C-terminal half is responsible for the 5' incision.</text>
</comment>
<comment type="subunit">
    <text evidence="1">Interacts with UvrB in an incision complex.</text>
</comment>
<comment type="subcellular location">
    <subcellularLocation>
        <location evidence="1">Cytoplasm</location>
    </subcellularLocation>
</comment>
<comment type="similarity">
    <text evidence="1">Belongs to the UvrC family.</text>
</comment>
<evidence type="ECO:0000255" key="1">
    <source>
        <dbReference type="HAMAP-Rule" id="MF_00203"/>
    </source>
</evidence>
<reference key="1">
    <citation type="journal article" date="2002" name="J. Mol. Microbiol. Biotechnol.">
        <title>The genome of Methanosarcina mazei: evidence for lateral gene transfer between Bacteria and Archaea.</title>
        <authorList>
            <person name="Deppenmeier U."/>
            <person name="Johann A."/>
            <person name="Hartsch T."/>
            <person name="Merkl R."/>
            <person name="Schmitz R.A."/>
            <person name="Martinez-Arias R."/>
            <person name="Henne A."/>
            <person name="Wiezer A."/>
            <person name="Baeumer S."/>
            <person name="Jacobi C."/>
            <person name="Brueggemann H."/>
            <person name="Lienard T."/>
            <person name="Christmann A."/>
            <person name="Boemecke M."/>
            <person name="Steckel S."/>
            <person name="Bhattacharyya A."/>
            <person name="Lykidis A."/>
            <person name="Overbeek R."/>
            <person name="Klenk H.-P."/>
            <person name="Gunsalus R.P."/>
            <person name="Fritz H.-J."/>
            <person name="Gottschalk G."/>
        </authorList>
    </citation>
    <scope>NUCLEOTIDE SEQUENCE [LARGE SCALE GENOMIC DNA]</scope>
    <source>
        <strain>ATCC BAA-159 / DSM 3647 / Goe1 / Go1 / JCM 11833 / OCM 88</strain>
    </source>
</reference>
<sequence>MGRGSKMIDLEALPHLPGCYLFKDEEGIVLYVGKAKDLKKRVSSYFQKRDHDPKTASLMQFARGLDFIVTNTEVEAFLLENTLIKKHWPRYNIMLKDSKRYACIHLTGEKFPRIRIARKNTGEGEFFGPFVSARERDYIFEVVRKTFQLRTCRKMPSRACLRYHIGACSGPCISSVSVEEYGEKVKKAISVLKGNIRELIESMETEMKEMAAKQMFEQAMELRDEIAALEYLQEKQNMERQKKYDEDILNYIVRDNNVYLMLFKVYKGTLEDKQDFVFAFGEDFLEEFLVQYYSENDPPEELIVPEPLDESLVEFLAHVKGKKVKVAVPKQGDKKELLDLVLKNVEIGFFGDRKKLEALQSKLSLPKIPNVIECFDISHLSGTATVGSMVQFRGGRPDKHNYRRFKIESVEGIDDFASIAEVVRRRYSRLLEDKHEMPDLIIIDGGKGQLSSAFQELRKLRVKVPIISIAKREEEIYVPGLKSPLPIKKDEKASLFVQEIRDEAHRFAINYNRLLRQKALIQK</sequence>
<proteinExistence type="inferred from homology"/>
<feature type="chain" id="PRO_0000138368" description="UvrABC system protein C">
    <location>
        <begin position="1"/>
        <end position="523"/>
    </location>
</feature>
<feature type="domain" description="GIY-YIG" evidence="1">
    <location>
        <begin position="15"/>
        <end position="93"/>
    </location>
</feature>
<feature type="domain" description="UVR" evidence="1">
    <location>
        <begin position="197"/>
        <end position="232"/>
    </location>
</feature>
<protein>
    <recommendedName>
        <fullName evidence="1">UvrABC system protein C</fullName>
        <shortName evidence="1">Protein UvrC</shortName>
    </recommendedName>
    <alternativeName>
        <fullName evidence="1">Excinuclease ABC subunit C</fullName>
    </alternativeName>
</protein>
<accession>Q8PRZ8</accession>
<gene>
    <name evidence="1" type="primary">uvrC</name>
    <name type="ordered locus">MM_3290</name>
</gene>
<organism>
    <name type="scientific">Methanosarcina mazei (strain ATCC BAA-159 / DSM 3647 / Goe1 / Go1 / JCM 11833 / OCM 88)</name>
    <name type="common">Methanosarcina frisia</name>
    <dbReference type="NCBI Taxonomy" id="192952"/>
    <lineage>
        <taxon>Archaea</taxon>
        <taxon>Methanobacteriati</taxon>
        <taxon>Methanobacteriota</taxon>
        <taxon>Stenosarchaea group</taxon>
        <taxon>Methanomicrobia</taxon>
        <taxon>Methanosarcinales</taxon>
        <taxon>Methanosarcinaceae</taxon>
        <taxon>Methanosarcina</taxon>
    </lineage>
</organism>